<gene>
    <name evidence="2" type="primary">tuf2</name>
    <name type="ordered locus">Shewmr4_0197</name>
</gene>
<keyword id="KW-0963">Cytoplasm</keyword>
<keyword id="KW-0251">Elongation factor</keyword>
<keyword id="KW-0342">GTP-binding</keyword>
<keyword id="KW-0378">Hydrolase</keyword>
<keyword id="KW-0460">Magnesium</keyword>
<keyword id="KW-0479">Metal-binding</keyword>
<keyword id="KW-0547">Nucleotide-binding</keyword>
<keyword id="KW-0648">Protein biosynthesis</keyword>
<evidence type="ECO:0000250" key="1"/>
<evidence type="ECO:0000255" key="2">
    <source>
        <dbReference type="HAMAP-Rule" id="MF_00118"/>
    </source>
</evidence>
<accession>Q0HNT9</accession>
<proteinExistence type="inferred from homology"/>
<dbReference type="EC" id="3.6.5.3" evidence="2"/>
<dbReference type="EMBL" id="CP000446">
    <property type="protein sequence ID" value="ABI37278.1"/>
    <property type="molecule type" value="Genomic_DNA"/>
</dbReference>
<dbReference type="RefSeq" id="WP_011621025.1">
    <property type="nucleotide sequence ID" value="NC_008321.1"/>
</dbReference>
<dbReference type="SMR" id="Q0HNT9"/>
<dbReference type="KEGG" id="she:Shewmr4_0197"/>
<dbReference type="HOGENOM" id="CLU_007265_0_1_6"/>
<dbReference type="GO" id="GO:0005829">
    <property type="term" value="C:cytosol"/>
    <property type="evidence" value="ECO:0007669"/>
    <property type="project" value="TreeGrafter"/>
</dbReference>
<dbReference type="GO" id="GO:0005525">
    <property type="term" value="F:GTP binding"/>
    <property type="evidence" value="ECO:0007669"/>
    <property type="project" value="UniProtKB-UniRule"/>
</dbReference>
<dbReference type="GO" id="GO:0003924">
    <property type="term" value="F:GTPase activity"/>
    <property type="evidence" value="ECO:0007669"/>
    <property type="project" value="InterPro"/>
</dbReference>
<dbReference type="GO" id="GO:0097216">
    <property type="term" value="F:guanosine tetraphosphate binding"/>
    <property type="evidence" value="ECO:0007669"/>
    <property type="project" value="UniProtKB-ARBA"/>
</dbReference>
<dbReference type="GO" id="GO:0003746">
    <property type="term" value="F:translation elongation factor activity"/>
    <property type="evidence" value="ECO:0007669"/>
    <property type="project" value="UniProtKB-UniRule"/>
</dbReference>
<dbReference type="CDD" id="cd01884">
    <property type="entry name" value="EF_Tu"/>
    <property type="match status" value="1"/>
</dbReference>
<dbReference type="CDD" id="cd03697">
    <property type="entry name" value="EFTU_II"/>
    <property type="match status" value="1"/>
</dbReference>
<dbReference type="CDD" id="cd03707">
    <property type="entry name" value="EFTU_III"/>
    <property type="match status" value="1"/>
</dbReference>
<dbReference type="FunFam" id="2.40.30.10:FF:000001">
    <property type="entry name" value="Elongation factor Tu"/>
    <property type="match status" value="1"/>
</dbReference>
<dbReference type="FunFam" id="3.40.50.300:FF:000003">
    <property type="entry name" value="Elongation factor Tu"/>
    <property type="match status" value="1"/>
</dbReference>
<dbReference type="Gene3D" id="3.40.50.300">
    <property type="entry name" value="P-loop containing nucleotide triphosphate hydrolases"/>
    <property type="match status" value="1"/>
</dbReference>
<dbReference type="Gene3D" id="2.40.30.10">
    <property type="entry name" value="Translation factors"/>
    <property type="match status" value="2"/>
</dbReference>
<dbReference type="HAMAP" id="MF_00118_B">
    <property type="entry name" value="EF_Tu_B"/>
    <property type="match status" value="1"/>
</dbReference>
<dbReference type="InterPro" id="IPR041709">
    <property type="entry name" value="EF-Tu_GTP-bd"/>
</dbReference>
<dbReference type="InterPro" id="IPR050055">
    <property type="entry name" value="EF-Tu_GTPase"/>
</dbReference>
<dbReference type="InterPro" id="IPR004161">
    <property type="entry name" value="EFTu-like_2"/>
</dbReference>
<dbReference type="InterPro" id="IPR033720">
    <property type="entry name" value="EFTU_2"/>
</dbReference>
<dbReference type="InterPro" id="IPR031157">
    <property type="entry name" value="G_TR_CS"/>
</dbReference>
<dbReference type="InterPro" id="IPR027417">
    <property type="entry name" value="P-loop_NTPase"/>
</dbReference>
<dbReference type="InterPro" id="IPR005225">
    <property type="entry name" value="Small_GTP-bd"/>
</dbReference>
<dbReference type="InterPro" id="IPR000795">
    <property type="entry name" value="T_Tr_GTP-bd_dom"/>
</dbReference>
<dbReference type="InterPro" id="IPR009000">
    <property type="entry name" value="Transl_B-barrel_sf"/>
</dbReference>
<dbReference type="InterPro" id="IPR009001">
    <property type="entry name" value="Transl_elong_EF1A/Init_IF2_C"/>
</dbReference>
<dbReference type="InterPro" id="IPR004541">
    <property type="entry name" value="Transl_elong_EFTu/EF1A_bac/org"/>
</dbReference>
<dbReference type="InterPro" id="IPR004160">
    <property type="entry name" value="Transl_elong_EFTu/EF1A_C"/>
</dbReference>
<dbReference type="NCBIfam" id="TIGR00485">
    <property type="entry name" value="EF-Tu"/>
    <property type="match status" value="1"/>
</dbReference>
<dbReference type="NCBIfam" id="NF000766">
    <property type="entry name" value="PRK00049.1"/>
    <property type="match status" value="1"/>
</dbReference>
<dbReference type="NCBIfam" id="NF009372">
    <property type="entry name" value="PRK12735.1"/>
    <property type="match status" value="1"/>
</dbReference>
<dbReference type="NCBIfam" id="NF009373">
    <property type="entry name" value="PRK12736.1"/>
    <property type="match status" value="1"/>
</dbReference>
<dbReference type="NCBIfam" id="TIGR00231">
    <property type="entry name" value="small_GTP"/>
    <property type="match status" value="1"/>
</dbReference>
<dbReference type="PANTHER" id="PTHR43721:SF22">
    <property type="entry name" value="ELONGATION FACTOR TU, MITOCHONDRIAL"/>
    <property type="match status" value="1"/>
</dbReference>
<dbReference type="PANTHER" id="PTHR43721">
    <property type="entry name" value="ELONGATION FACTOR TU-RELATED"/>
    <property type="match status" value="1"/>
</dbReference>
<dbReference type="Pfam" id="PF00009">
    <property type="entry name" value="GTP_EFTU"/>
    <property type="match status" value="1"/>
</dbReference>
<dbReference type="Pfam" id="PF03144">
    <property type="entry name" value="GTP_EFTU_D2"/>
    <property type="match status" value="1"/>
</dbReference>
<dbReference type="Pfam" id="PF03143">
    <property type="entry name" value="GTP_EFTU_D3"/>
    <property type="match status" value="1"/>
</dbReference>
<dbReference type="PRINTS" id="PR00315">
    <property type="entry name" value="ELONGATNFCT"/>
</dbReference>
<dbReference type="SUPFAM" id="SSF50465">
    <property type="entry name" value="EF-Tu/eEF-1alpha/eIF2-gamma C-terminal domain"/>
    <property type="match status" value="1"/>
</dbReference>
<dbReference type="SUPFAM" id="SSF52540">
    <property type="entry name" value="P-loop containing nucleoside triphosphate hydrolases"/>
    <property type="match status" value="1"/>
</dbReference>
<dbReference type="SUPFAM" id="SSF50447">
    <property type="entry name" value="Translation proteins"/>
    <property type="match status" value="1"/>
</dbReference>
<dbReference type="PROSITE" id="PS00301">
    <property type="entry name" value="G_TR_1"/>
    <property type="match status" value="1"/>
</dbReference>
<dbReference type="PROSITE" id="PS51722">
    <property type="entry name" value="G_TR_2"/>
    <property type="match status" value="1"/>
</dbReference>
<organism>
    <name type="scientific">Shewanella sp. (strain MR-4)</name>
    <dbReference type="NCBI Taxonomy" id="60480"/>
    <lineage>
        <taxon>Bacteria</taxon>
        <taxon>Pseudomonadati</taxon>
        <taxon>Pseudomonadota</taxon>
        <taxon>Gammaproteobacteria</taxon>
        <taxon>Alteromonadales</taxon>
        <taxon>Shewanellaceae</taxon>
        <taxon>Shewanella</taxon>
    </lineage>
</organism>
<reference key="1">
    <citation type="submission" date="2006-08" db="EMBL/GenBank/DDBJ databases">
        <title>Complete sequence of Shewanella sp. MR-4.</title>
        <authorList>
            <consortium name="US DOE Joint Genome Institute"/>
            <person name="Copeland A."/>
            <person name="Lucas S."/>
            <person name="Lapidus A."/>
            <person name="Barry K."/>
            <person name="Detter J.C."/>
            <person name="Glavina del Rio T."/>
            <person name="Hammon N."/>
            <person name="Israni S."/>
            <person name="Dalin E."/>
            <person name="Tice H."/>
            <person name="Pitluck S."/>
            <person name="Kiss H."/>
            <person name="Brettin T."/>
            <person name="Bruce D."/>
            <person name="Han C."/>
            <person name="Tapia R."/>
            <person name="Gilna P."/>
            <person name="Schmutz J."/>
            <person name="Larimer F."/>
            <person name="Land M."/>
            <person name="Hauser L."/>
            <person name="Kyrpides N."/>
            <person name="Mikhailova N."/>
            <person name="Nealson K."/>
            <person name="Konstantinidis K."/>
            <person name="Klappenbach J."/>
            <person name="Tiedje J."/>
            <person name="Richardson P."/>
        </authorList>
    </citation>
    <scope>NUCLEOTIDE SEQUENCE [LARGE SCALE GENOMIC DNA]</scope>
    <source>
        <strain>MR-4</strain>
    </source>
</reference>
<comment type="function">
    <text evidence="2">GTP hydrolase that promotes the GTP-dependent binding of aminoacyl-tRNA to the A-site of ribosomes during protein biosynthesis.</text>
</comment>
<comment type="catalytic activity">
    <reaction evidence="2">
        <text>GTP + H2O = GDP + phosphate + H(+)</text>
        <dbReference type="Rhea" id="RHEA:19669"/>
        <dbReference type="ChEBI" id="CHEBI:15377"/>
        <dbReference type="ChEBI" id="CHEBI:15378"/>
        <dbReference type="ChEBI" id="CHEBI:37565"/>
        <dbReference type="ChEBI" id="CHEBI:43474"/>
        <dbReference type="ChEBI" id="CHEBI:58189"/>
        <dbReference type="EC" id="3.6.5.3"/>
    </reaction>
    <physiologicalReaction direction="left-to-right" evidence="2">
        <dbReference type="Rhea" id="RHEA:19670"/>
    </physiologicalReaction>
</comment>
<comment type="subunit">
    <text evidence="2">Monomer.</text>
</comment>
<comment type="subcellular location">
    <subcellularLocation>
        <location evidence="2">Cytoplasm</location>
    </subcellularLocation>
</comment>
<comment type="similarity">
    <text evidence="2">Belongs to the TRAFAC class translation factor GTPase superfamily. Classic translation factor GTPase family. EF-Tu/EF-1A subfamily.</text>
</comment>
<sequence>MAKAKFERNKPHVNVGTIGHVDHGKTTLTAAISHVLAKTYGGEAKDFSQIDNAPEERERGITINTSHIEYDTPTRHYAHVDCPGHADYVKNMITGAAQMDGAILVVASTDGPMPQTREHILLSRQVGVPFIIVFMNKCDMVDDAELLELVEMEVRELLSEYDFPGDDLPVIQGSALKALEGEPEWEAKIIELAAALDSYIPEPERDIDKPFLMPIEDVFSISGRGTVVTGRVERGIVRVGDEVEIVGIRTTTKTTCTGVEMFRKLLDEGRAGENCGILLRGTKRDDVERGQVLSKPGSINPHTTFESEVYVLSKEEGGRHTPFFKGYRPQFYFRTTDVTGTIELPEGVEMVMPGDNIKMVVTLICPIAMDEGLRFAIREGGRTVGAGVVAKIIA</sequence>
<feature type="chain" id="PRO_0000337535" description="Elongation factor Tu 2">
    <location>
        <begin position="1"/>
        <end position="394"/>
    </location>
</feature>
<feature type="domain" description="tr-type G">
    <location>
        <begin position="10"/>
        <end position="204"/>
    </location>
</feature>
<feature type="region of interest" description="G1" evidence="1">
    <location>
        <begin position="19"/>
        <end position="26"/>
    </location>
</feature>
<feature type="region of interest" description="G2" evidence="1">
    <location>
        <begin position="60"/>
        <end position="64"/>
    </location>
</feature>
<feature type="region of interest" description="G3" evidence="1">
    <location>
        <begin position="81"/>
        <end position="84"/>
    </location>
</feature>
<feature type="region of interest" description="G4" evidence="1">
    <location>
        <begin position="136"/>
        <end position="139"/>
    </location>
</feature>
<feature type="region of interest" description="G5" evidence="1">
    <location>
        <begin position="174"/>
        <end position="176"/>
    </location>
</feature>
<feature type="binding site" evidence="2">
    <location>
        <begin position="19"/>
        <end position="26"/>
    </location>
    <ligand>
        <name>GTP</name>
        <dbReference type="ChEBI" id="CHEBI:37565"/>
    </ligand>
</feature>
<feature type="binding site" evidence="2">
    <location>
        <position position="26"/>
    </location>
    <ligand>
        <name>Mg(2+)</name>
        <dbReference type="ChEBI" id="CHEBI:18420"/>
    </ligand>
</feature>
<feature type="binding site" evidence="2">
    <location>
        <begin position="81"/>
        <end position="85"/>
    </location>
    <ligand>
        <name>GTP</name>
        <dbReference type="ChEBI" id="CHEBI:37565"/>
    </ligand>
</feature>
<feature type="binding site" evidence="2">
    <location>
        <begin position="136"/>
        <end position="139"/>
    </location>
    <ligand>
        <name>GTP</name>
        <dbReference type="ChEBI" id="CHEBI:37565"/>
    </ligand>
</feature>
<protein>
    <recommendedName>
        <fullName evidence="2">Elongation factor Tu 2</fullName>
        <shortName evidence="2">EF-Tu 2</shortName>
        <ecNumber evidence="2">3.6.5.3</ecNumber>
    </recommendedName>
</protein>
<name>EFTU2_SHESM</name>